<sequence>MPPPTAQFMGPTQAGQNESQNQSSGEAGEQNQEHGQGPTPILNQSQPASSQPQHQQQRNESISYYTNFNQPRYSTDASINSFLNISDNVPVTSTGGPSSGGAYSNLPRLSTSSTHQPPDLSQIGRGFSIVNNLFPQQQQLQNQHRQQQQQQQQQSHQQPPFKTPSFSTGLTGSSSQYQFLPRNDNTSQPPSKRNSVYLGPNDGPDFEFFSMQQSQQPQFQPSSRRESNSMRPPLLIPAATTKSQSNGTNNSGNMNTNADYESFFNTGTNNSNSNQNPYFLSSRNNSLKFNPEDFDFQFKRRNSFVRGTLDHSSQNAFIPESRLNSLSVNNKANGDPVADNVTNNMKGKSNEVDNDDGNDSSNNNNNNNNNNNNENNNDNNNDNNDNSINSATSTNIPNQEDHSLASTDTTSNSRKDLKEIEQRLRKHLNDEDNYSSAISRPLDKNDVIEGSEGLNKHIDESGMQPNIIKKRKKDDSTVYVKNEMPRTDPPMSKDNSTSAEGAAMANFSGKEPPIPDISSVSDDATNLIGATKVDQLMLIIQARKKGFTEKVNTTQDGDLLFNQTMDILPPKSELVGGVEKPKGTQNTRAVKKHECPYCHRLFSQATHLEVHVRSHIGYKPFVCDYCGKRFTQGGNLRTHERLHTGEKPYSCDICDKKFSRKGNLAAHLVTHQKLKPFVCKLENCNKTFTQLGNMKAHQNRFHKETLNALTAKLAEMNPSENIPLEERQLLEYFASIYKNSNRGIKGRGKGVGTKKSTISSPENHPASTILNPNTNANNAIANDSENNGNPEGNIDSSSNSNPGSHSMISPTQKDMGTLQSQFIQNNFNNSVNSSNPSNQPIINYNYTTLPHSRLGSSSSSNTNNNNSNFSVGAAPGVLMAPTTNNDFSFNLDQSNDNERSQQEQVRFKNINYKS</sequence>
<comment type="function">
    <text evidence="3 5 7 8 10">Transcription factor involved in the diauxic shift (PubMed:11839825, PubMed:16467472, PubMed:23549479). In the presence of glucose, activates carbon and energy metabolism genes, and in te presence of glycerol-lactate, activates genes needed for cell wall maintenance (PubMed:11839825, PubMed:16467472, PubMed:23549479). Binds to DNA elements with the sequence AAAAGAAA (A4GA3), a motif enriched in the promoters of AZF1-sensitive genes (PubMed:16467472, PubMed:23388641). Required for glucose induction of CLN3 transcription (PubMed:11839825). Also required for proper FLO11 expression (PubMed:23388641). May also function as a corepressor (PubMed:34019539).</text>
</comment>
<comment type="function">
    <text evidence="9 10">As an intrinsically disordered protein, AZF1 is capable of forming the prion [AZF1+] that confers resistance to the drug radicicol in a gain-of-function manner but decreases the expression of AZF1's target genes.</text>
</comment>
<comment type="subcellular location">
    <subcellularLocation>
        <location evidence="6 10 11">Nucleus</location>
    </subcellularLocation>
    <subcellularLocation>
        <location evidence="6">Cytoplasm</location>
        <location evidence="6">Cytosol</location>
    </subcellularLocation>
    <text evidence="6">relocalizes to the cytosol in response to hypoxia.</text>
</comment>
<comment type="induction">
    <text evidence="11">Expression inceases under non-fermentable growth conditions.</text>
</comment>
<comment type="domain">
    <text evidence="10">The polyglutamine (polyQ) domain is required for transcription factor activity.</text>
</comment>
<comment type="domain">
    <text evidence="10">The polyasparagine (polyN) domain plays a subtle role in transcription but is dispensable for localization and prion formation.</text>
</comment>
<comment type="disruption phenotype">
    <text evidence="3 11">Leads to a defect in the division of the nucleus (PubMed:9799362). Reduces the transcriptional induction of CLN3 by glucose (PubMed:11839825).</text>
</comment>
<comment type="miscellaneous">
    <text evidence="4">Presentwith 556 molecules/cell in log phase SD medium.</text>
</comment>
<keyword id="KW-0034">Amyloid</keyword>
<keyword id="KW-0963">Cytoplasm</keyword>
<keyword id="KW-0238">DNA-binding</keyword>
<keyword id="KW-0479">Metal-binding</keyword>
<keyword id="KW-0539">Nucleus</keyword>
<keyword id="KW-0597">Phosphoprotein</keyword>
<keyword id="KW-0640">Prion</keyword>
<keyword id="KW-1185">Reference proteome</keyword>
<keyword id="KW-0677">Repeat</keyword>
<keyword id="KW-0804">Transcription</keyword>
<keyword id="KW-0805">Transcription regulation</keyword>
<keyword id="KW-0862">Zinc</keyword>
<keyword id="KW-0863">Zinc-finger</keyword>
<gene>
    <name evidence="13" type="primary">AZF1</name>
    <name type="ordered locus">YOR113W</name>
    <name type="ORF">O3244</name>
    <name type="ORF">YOR3244W</name>
</gene>
<organism>
    <name type="scientific">Saccharomyces cerevisiae (strain ATCC 204508 / S288c)</name>
    <name type="common">Baker's yeast</name>
    <dbReference type="NCBI Taxonomy" id="559292"/>
    <lineage>
        <taxon>Eukaryota</taxon>
        <taxon>Fungi</taxon>
        <taxon>Dikarya</taxon>
        <taxon>Ascomycota</taxon>
        <taxon>Saccharomycotina</taxon>
        <taxon>Saccharomycetes</taxon>
        <taxon>Saccharomycetales</taxon>
        <taxon>Saccharomycetaceae</taxon>
        <taxon>Saccharomyces</taxon>
    </lineage>
</organism>
<dbReference type="EMBL" id="Z26253">
    <property type="protein sequence ID" value="CAA81212.1"/>
    <property type="molecule type" value="Genomic_DNA"/>
</dbReference>
<dbReference type="EMBL" id="X90518">
    <property type="protein sequence ID" value="CAA62111.1"/>
    <property type="molecule type" value="Genomic_DNA"/>
</dbReference>
<dbReference type="EMBL" id="X94335">
    <property type="protein sequence ID" value="CAA64033.1"/>
    <property type="molecule type" value="Genomic_DNA"/>
</dbReference>
<dbReference type="EMBL" id="Z75021">
    <property type="protein sequence ID" value="CAA99311.1"/>
    <property type="molecule type" value="Genomic_DNA"/>
</dbReference>
<dbReference type="EMBL" id="BK006948">
    <property type="protein sequence ID" value="DAA10888.1"/>
    <property type="molecule type" value="Genomic_DNA"/>
</dbReference>
<dbReference type="PIR" id="S46593">
    <property type="entry name" value="S46593"/>
</dbReference>
<dbReference type="RefSeq" id="NP_014756.3">
    <property type="nucleotide sequence ID" value="NM_001183532.3"/>
</dbReference>
<dbReference type="SMR" id="P41696"/>
<dbReference type="BioGRID" id="34509">
    <property type="interactions" value="191"/>
</dbReference>
<dbReference type="FunCoup" id="P41696">
    <property type="interactions" value="300"/>
</dbReference>
<dbReference type="IntAct" id="P41696">
    <property type="interactions" value="12"/>
</dbReference>
<dbReference type="MINT" id="P41696"/>
<dbReference type="STRING" id="4932.YOR113W"/>
<dbReference type="GlyGen" id="P41696">
    <property type="glycosylation" value="2 sites, 1 O-linked glycan (1 site)"/>
</dbReference>
<dbReference type="iPTMnet" id="P41696"/>
<dbReference type="PaxDb" id="4932-YOR113W"/>
<dbReference type="PeptideAtlas" id="P41696"/>
<dbReference type="EnsemblFungi" id="YOR113W_mRNA">
    <property type="protein sequence ID" value="YOR113W"/>
    <property type="gene ID" value="YOR113W"/>
</dbReference>
<dbReference type="GeneID" id="854280"/>
<dbReference type="KEGG" id="sce:YOR113W"/>
<dbReference type="AGR" id="SGD:S000005639"/>
<dbReference type="SGD" id="S000005639">
    <property type="gene designation" value="AZF1"/>
</dbReference>
<dbReference type="VEuPathDB" id="FungiDB:YOR113W"/>
<dbReference type="eggNOG" id="KOG1721">
    <property type="taxonomic scope" value="Eukaryota"/>
</dbReference>
<dbReference type="GeneTree" id="ENSGT00530000068109"/>
<dbReference type="HOGENOM" id="CLU_010433_0_0_1"/>
<dbReference type="InParanoid" id="P41696"/>
<dbReference type="OMA" id="YCHKCFT"/>
<dbReference type="OrthoDB" id="427030at2759"/>
<dbReference type="BioCyc" id="YEAST:G3O-33642-MONOMER"/>
<dbReference type="BioGRID-ORCS" id="854280">
    <property type="hits" value="5 hits in 13 CRISPR screens"/>
</dbReference>
<dbReference type="PRO" id="PR:P41696"/>
<dbReference type="Proteomes" id="UP000002311">
    <property type="component" value="Chromosome XV"/>
</dbReference>
<dbReference type="RNAct" id="P41696">
    <property type="molecule type" value="protein"/>
</dbReference>
<dbReference type="GO" id="GO:0005829">
    <property type="term" value="C:cytosol"/>
    <property type="evidence" value="ECO:0000314"/>
    <property type="project" value="SGD"/>
</dbReference>
<dbReference type="GO" id="GO:0005634">
    <property type="term" value="C:nucleus"/>
    <property type="evidence" value="ECO:0000314"/>
    <property type="project" value="SGD"/>
</dbReference>
<dbReference type="GO" id="GO:0001228">
    <property type="term" value="F:DNA-binding transcription activator activity, RNA polymerase II-specific"/>
    <property type="evidence" value="ECO:0000314"/>
    <property type="project" value="SGD"/>
</dbReference>
<dbReference type="GO" id="GO:0003700">
    <property type="term" value="F:DNA-binding transcription factor activity"/>
    <property type="evidence" value="ECO:0000318"/>
    <property type="project" value="GO_Central"/>
</dbReference>
<dbReference type="GO" id="GO:0000978">
    <property type="term" value="F:RNA polymerase II cis-regulatory region sequence-specific DNA binding"/>
    <property type="evidence" value="ECO:0000314"/>
    <property type="project" value="SGD"/>
</dbReference>
<dbReference type="GO" id="GO:0043565">
    <property type="term" value="F:sequence-specific DNA binding"/>
    <property type="evidence" value="ECO:0007005"/>
    <property type="project" value="SGD"/>
</dbReference>
<dbReference type="GO" id="GO:0008270">
    <property type="term" value="F:zinc ion binding"/>
    <property type="evidence" value="ECO:0007669"/>
    <property type="project" value="UniProtKB-KW"/>
</dbReference>
<dbReference type="GO" id="GO:0071322">
    <property type="term" value="P:cellular response to carbohydrate stimulus"/>
    <property type="evidence" value="ECO:0000315"/>
    <property type="project" value="SGD"/>
</dbReference>
<dbReference type="GO" id="GO:0060237">
    <property type="term" value="P:regulation of fungal-type cell wall organization"/>
    <property type="evidence" value="ECO:0000315"/>
    <property type="project" value="SGD"/>
</dbReference>
<dbReference type="GO" id="GO:0006357">
    <property type="term" value="P:regulation of transcription by RNA polymerase II"/>
    <property type="evidence" value="ECO:0000314"/>
    <property type="project" value="SGD"/>
</dbReference>
<dbReference type="FunFam" id="3.30.160.60:FF:001907">
    <property type="entry name" value="AZF1 (YOR113W)"/>
    <property type="match status" value="1"/>
</dbReference>
<dbReference type="FunFam" id="3.30.160.60:FF:002224">
    <property type="entry name" value="AZF1p Zinc-finger transcription factor"/>
    <property type="match status" value="1"/>
</dbReference>
<dbReference type="FunFam" id="3.30.160.60:FF:002157">
    <property type="entry name" value="Transcription factor"/>
    <property type="match status" value="1"/>
</dbReference>
<dbReference type="Gene3D" id="3.30.160.60">
    <property type="entry name" value="Classic Zinc Finger"/>
    <property type="match status" value="4"/>
</dbReference>
<dbReference type="InterPro" id="IPR036236">
    <property type="entry name" value="Znf_C2H2_sf"/>
</dbReference>
<dbReference type="InterPro" id="IPR013087">
    <property type="entry name" value="Znf_C2H2_type"/>
</dbReference>
<dbReference type="PANTHER" id="PTHR24376:SF243">
    <property type="entry name" value="C2H2-TYPE DOMAIN-CONTAINING PROTEIN"/>
    <property type="match status" value="1"/>
</dbReference>
<dbReference type="PANTHER" id="PTHR24376">
    <property type="entry name" value="ZINC FINGER PROTEIN"/>
    <property type="match status" value="1"/>
</dbReference>
<dbReference type="Pfam" id="PF00096">
    <property type="entry name" value="zf-C2H2"/>
    <property type="match status" value="4"/>
</dbReference>
<dbReference type="SMART" id="SM00355">
    <property type="entry name" value="ZnF_C2H2"/>
    <property type="match status" value="4"/>
</dbReference>
<dbReference type="SUPFAM" id="SSF57667">
    <property type="entry name" value="beta-beta-alpha zinc fingers"/>
    <property type="match status" value="2"/>
</dbReference>
<dbReference type="PROSITE" id="PS00028">
    <property type="entry name" value="ZINC_FINGER_C2H2_1"/>
    <property type="match status" value="4"/>
</dbReference>
<dbReference type="PROSITE" id="PS50157">
    <property type="entry name" value="ZINC_FINGER_C2H2_2"/>
    <property type="match status" value="4"/>
</dbReference>
<evidence type="ECO:0000255" key="1">
    <source>
        <dbReference type="PROSITE-ProRule" id="PRU00042"/>
    </source>
</evidence>
<evidence type="ECO:0000256" key="2">
    <source>
        <dbReference type="SAM" id="MobiDB-lite"/>
    </source>
</evidence>
<evidence type="ECO:0000269" key="3">
    <source>
    </source>
</evidence>
<evidence type="ECO:0000269" key="4">
    <source>
    </source>
</evidence>
<evidence type="ECO:0000269" key="5">
    <source>
    </source>
</evidence>
<evidence type="ECO:0000269" key="6">
    <source>
    </source>
</evidence>
<evidence type="ECO:0000269" key="7">
    <source>
    </source>
</evidence>
<evidence type="ECO:0000269" key="8">
    <source>
    </source>
</evidence>
<evidence type="ECO:0000269" key="9">
    <source>
    </source>
</evidence>
<evidence type="ECO:0000269" key="10">
    <source>
    </source>
</evidence>
<evidence type="ECO:0000269" key="11">
    <source>
    </source>
</evidence>
<evidence type="ECO:0000303" key="12">
    <source>
    </source>
</evidence>
<evidence type="ECO:0000303" key="13">
    <source>
    </source>
</evidence>
<evidence type="ECO:0007744" key="14">
    <source>
    </source>
</evidence>
<reference key="1">
    <citation type="journal article" date="1994" name="Yeast">
        <title>A new nuclear suppressor system for a mitochondrial RNA polymerase mutant identifies an unusual zinc-finger protein and a polyglutamine domain protein in Saccharomyces cerevisiae.</title>
        <authorList>
            <person name="Broehl S."/>
            <person name="Lisowsky T."/>
            <person name="Riemen G."/>
            <person name="Michaelis G."/>
        </authorList>
    </citation>
    <scope>NUCLEOTIDE SEQUENCE [GENOMIC DNA]</scope>
    <scope>IDENTIFICATION</scope>
    <source>
        <strain>SC167</strain>
    </source>
</reference>
<reference key="2">
    <citation type="journal article" date="1996" name="Yeast">
        <title>Sequencing and analysis of 51 kb on the right arm of chromosome XV from Saccharomyces cerevisiae reveals 30 open reading frames.</title>
        <authorList>
            <person name="Wiemann S."/>
            <person name="Rechmann S."/>
            <person name="Benes V."/>
            <person name="Voss H."/>
            <person name="Schwager C."/>
            <person name="Vlcek C."/>
            <person name="Stegemann J."/>
            <person name="Zimmermann J."/>
            <person name="Erfle H."/>
            <person name="Paces V."/>
            <person name="Ansorge W."/>
        </authorList>
    </citation>
    <scope>NUCLEOTIDE SEQUENCE [GENOMIC DNA]</scope>
    <source>
        <strain>ATCC 96604 / S288c / FY1679</strain>
    </source>
</reference>
<reference key="3">
    <citation type="journal article" date="1997" name="Yeast">
        <title>DNA sequencing and analysis of 130 kb from yeast chromosome XV.</title>
        <authorList>
            <person name="Voss H."/>
            <person name="Benes V."/>
            <person name="Andrade M.A."/>
            <person name="Valencia A."/>
            <person name="Rechmann S."/>
            <person name="Teodoru C."/>
            <person name="Schwager C."/>
            <person name="Paces V."/>
            <person name="Sander C."/>
            <person name="Ansorge W."/>
        </authorList>
    </citation>
    <scope>NUCLEOTIDE SEQUENCE [GENOMIC DNA]</scope>
</reference>
<reference key="4">
    <citation type="journal article" date="1997" name="Nature">
        <title>The nucleotide sequence of Saccharomyces cerevisiae chromosome XV.</title>
        <authorList>
            <person name="Dujon B."/>
            <person name="Albermann K."/>
            <person name="Aldea M."/>
            <person name="Alexandraki D."/>
            <person name="Ansorge W."/>
            <person name="Arino J."/>
            <person name="Benes V."/>
            <person name="Bohn C."/>
            <person name="Bolotin-Fukuhara M."/>
            <person name="Bordonne R."/>
            <person name="Boyer J."/>
            <person name="Camasses A."/>
            <person name="Casamayor A."/>
            <person name="Casas C."/>
            <person name="Cheret G."/>
            <person name="Cziepluch C."/>
            <person name="Daignan-Fornier B."/>
            <person name="Dang V.-D."/>
            <person name="de Haan M."/>
            <person name="Delius H."/>
            <person name="Durand P."/>
            <person name="Fairhead C."/>
            <person name="Feldmann H."/>
            <person name="Gaillon L."/>
            <person name="Galisson F."/>
            <person name="Gamo F.-J."/>
            <person name="Gancedo C."/>
            <person name="Goffeau A."/>
            <person name="Goulding S.E."/>
            <person name="Grivell L.A."/>
            <person name="Habbig B."/>
            <person name="Hand N.J."/>
            <person name="Hani J."/>
            <person name="Hattenhorst U."/>
            <person name="Hebling U."/>
            <person name="Hernando Y."/>
            <person name="Herrero E."/>
            <person name="Heumann K."/>
            <person name="Hiesel R."/>
            <person name="Hilger F."/>
            <person name="Hofmann B."/>
            <person name="Hollenberg C.P."/>
            <person name="Hughes B."/>
            <person name="Jauniaux J.-C."/>
            <person name="Kalogeropoulos A."/>
            <person name="Katsoulou C."/>
            <person name="Kordes E."/>
            <person name="Lafuente M.J."/>
            <person name="Landt O."/>
            <person name="Louis E.J."/>
            <person name="Maarse A.C."/>
            <person name="Madania A."/>
            <person name="Mannhaupt G."/>
            <person name="Marck C."/>
            <person name="Martin R.P."/>
            <person name="Mewes H.-W."/>
            <person name="Michaux G."/>
            <person name="Paces V."/>
            <person name="Parle-McDermott A.G."/>
            <person name="Pearson B.M."/>
            <person name="Perrin A."/>
            <person name="Pettersson B."/>
            <person name="Poch O."/>
            <person name="Pohl T.M."/>
            <person name="Poirey R."/>
            <person name="Portetelle D."/>
            <person name="Pujol A."/>
            <person name="Purnelle B."/>
            <person name="Ramezani Rad M."/>
            <person name="Rechmann S."/>
            <person name="Schwager C."/>
            <person name="Schweizer M."/>
            <person name="Sor F."/>
            <person name="Sterky F."/>
            <person name="Tarassov I.A."/>
            <person name="Teodoru C."/>
            <person name="Tettelin H."/>
            <person name="Thierry A."/>
            <person name="Tobiasch E."/>
            <person name="Tzermia M."/>
            <person name="Uhlen M."/>
            <person name="Unseld M."/>
            <person name="Valens M."/>
            <person name="Vandenbol M."/>
            <person name="Vetter I."/>
            <person name="Vlcek C."/>
            <person name="Voet M."/>
            <person name="Volckaert G."/>
            <person name="Voss H."/>
            <person name="Wambutt R."/>
            <person name="Wedler H."/>
            <person name="Wiemann S."/>
            <person name="Winsor B."/>
            <person name="Wolfe K.H."/>
            <person name="Zollner A."/>
            <person name="Zumstein E."/>
            <person name="Kleine K."/>
        </authorList>
    </citation>
    <scope>NUCLEOTIDE SEQUENCE [LARGE SCALE GENOMIC DNA]</scope>
    <source>
        <strain>ATCC 204508 / S288c</strain>
    </source>
</reference>
<reference key="5">
    <citation type="journal article" date="2014" name="G3 (Bethesda)">
        <title>The reference genome sequence of Saccharomyces cerevisiae: Then and now.</title>
        <authorList>
            <person name="Engel S.R."/>
            <person name="Dietrich F.S."/>
            <person name="Fisk D.G."/>
            <person name="Binkley G."/>
            <person name="Balakrishnan R."/>
            <person name="Costanzo M.C."/>
            <person name="Dwight S.S."/>
            <person name="Hitz B.C."/>
            <person name="Karra K."/>
            <person name="Nash R.S."/>
            <person name="Weng S."/>
            <person name="Wong E.D."/>
            <person name="Lloyd P."/>
            <person name="Skrzypek M.S."/>
            <person name="Miyasato S.R."/>
            <person name="Simison M."/>
            <person name="Cherry J.M."/>
        </authorList>
    </citation>
    <scope>GENOME REANNOTATION</scope>
    <source>
        <strain>ATCC 204508 / S288c</strain>
    </source>
</reference>
<reference key="6">
    <citation type="journal article" date="1998" name="Curr. Genet.">
        <title>Azf1p is a nuclear-localized zinc-finger protein that is preferentially expressed under non-fermentative growth conditions in Saccharomyces cerevisiae.</title>
        <authorList>
            <person name="Stein T."/>
            <person name="Kricke J."/>
            <person name="Becher D."/>
            <person name="Lisowsky T."/>
        </authorList>
    </citation>
    <scope>SUBCELLULAR LOCATION</scope>
    <scope>INDUCTION</scope>
    <scope>DISRUPTION PHENOTYPE</scope>
</reference>
<reference key="7">
    <citation type="journal article" date="2002" name="Mol. Cell. Biol.">
        <title>AZF1 is a glucose-dependent positive regulator of CLN3 transcription in Saccharomyces cerevisiae.</title>
        <authorList>
            <person name="Newcomb L.L."/>
            <person name="Hall D.D."/>
            <person name="Heideman W."/>
        </authorList>
    </citation>
    <scope>FUNCTION</scope>
    <scope>DISRUPTION PHENOTYPE</scope>
</reference>
<reference key="8">
    <citation type="journal article" date="2003" name="Nature">
        <title>Global analysis of protein expression in yeast.</title>
        <authorList>
            <person name="Ghaemmaghami S."/>
            <person name="Huh W.-K."/>
            <person name="Bower K."/>
            <person name="Howson R.W."/>
            <person name="Belle A."/>
            <person name="Dephoure N."/>
            <person name="O'Shea E.K."/>
            <person name="Weissman J.S."/>
        </authorList>
    </citation>
    <scope>LEVEL OF PROTEIN EXPRESSION [LARGE SCALE ANALYSIS]</scope>
</reference>
<reference key="9">
    <citation type="journal article" date="2006" name="Eukaryot. Cell">
        <title>The function and properties of the Azf1 transcriptional regulator change with growth conditions in Saccharomyces cerevisiae.</title>
        <authorList>
            <person name="Slattery M.G."/>
            <person name="Liko D."/>
            <person name="Heideman W."/>
        </authorList>
    </citation>
    <scope>FUNCTION</scope>
</reference>
<reference key="10">
    <citation type="journal article" date="2009" name="Science">
        <title>Global analysis of Cdk1 substrate phosphorylation sites provides insights into evolution.</title>
        <authorList>
            <person name="Holt L.J."/>
            <person name="Tuch B.B."/>
            <person name="Villen J."/>
            <person name="Johnson A.D."/>
            <person name="Gygi S.P."/>
            <person name="Morgan D.O."/>
        </authorList>
    </citation>
    <scope>PHOSPHORYLATION [LARGE SCALE ANALYSIS] AT SER-61; SER-286 AND SER-325</scope>
    <scope>IDENTIFICATION BY MASS SPECTROMETRY [LARGE SCALE ANALYSIS]</scope>
</reference>
<reference key="11">
    <citation type="journal article" date="2012" name="Cell Biosci.">
        <title>The nuclear localization of SWI/SNF proteins is subjected to oxygen regulation.</title>
        <authorList>
            <person name="Dastidar R.G."/>
            <person name="Hooda J."/>
            <person name="Shah A."/>
            <person name="Cao T.M."/>
            <person name="Henke R.M."/>
            <person name="Zhang L."/>
        </authorList>
    </citation>
    <scope>SUBCELLULAR LOCATION</scope>
</reference>
<reference key="12">
    <citation type="journal article" date="2013" name="Mol. Syst. Biol.">
        <title>Temporal system-level organization of the switch from glycolytic to gluconeogenic operation in yeast.</title>
        <authorList>
            <person name="Zampar G.G."/>
            <person name="Kuemmel A."/>
            <person name="Ewald J."/>
            <person name="Jol S."/>
            <person name="Niebel B."/>
            <person name="Picotti P."/>
            <person name="Aebersold R."/>
            <person name="Sauer U."/>
            <person name="Zamboni N."/>
            <person name="Heinemann M."/>
        </authorList>
    </citation>
    <scope>FUNCTION</scope>
</reference>
<reference key="13">
    <citation type="journal article" date="2013" name="Proc. Natl. Acad. Sci. U.S.A.">
        <title>Systematic measurement of transcription factor-DNA interactions by targeted mass spectrometry identifies candidate gene regulatory proteins.</title>
        <authorList>
            <person name="Mirzaei H."/>
            <person name="Knijnenburg T.A."/>
            <person name="Kim B."/>
            <person name="Robinson M."/>
            <person name="Picotti P."/>
            <person name="Carter G.W."/>
            <person name="Li S."/>
            <person name="Dilworth D.J."/>
            <person name="Eng J.K."/>
            <person name="Aitchison J.D."/>
            <person name="Shmulevich I."/>
            <person name="Galitski T."/>
            <person name="Aebersold R."/>
            <person name="Ranish J."/>
        </authorList>
    </citation>
    <scope>FUNCTION</scope>
</reference>
<reference key="14">
    <citation type="journal article" date="2016" name="Cell">
        <title>Intrinsically Disordered Proteins Drive Emergence and Inheritance of Biological Traits.</title>
        <authorList>
            <person name="Chakrabortee S."/>
            <person name="Byers J.S."/>
            <person name="Jones S."/>
            <person name="Garcia D.M."/>
            <person name="Bhullar B."/>
            <person name="Chang A."/>
            <person name="She R."/>
            <person name="Lee L."/>
            <person name="Fremin B."/>
            <person name="Lindquist S."/>
            <person name="Jarosz D.F."/>
        </authorList>
    </citation>
    <scope>FUNCTION</scope>
    <scope>PRION-FORMING</scope>
</reference>
<reference key="15">
    <citation type="journal article" date="2021" name="PLoS ONE">
        <title>Defining the role of the polyasparagine repeat domain of the S. cerevisiae transcription factor Azf1p.</title>
        <authorList>
            <person name="Stewart T."/>
            <person name="Wolfe B.E."/>
            <person name="Fuchs S.M."/>
        </authorList>
    </citation>
    <scope>FUNCTION</scope>
    <scope>DOMAIN</scope>
    <scope>PRION-FORMING</scope>
    <scope>SUBCELLULAR LOCATION</scope>
</reference>
<proteinExistence type="evidence at protein level"/>
<feature type="chain" id="PRO_0000046802" description="Transcription factor AZF1">
    <location>
        <begin position="1"/>
        <end position="914"/>
    </location>
</feature>
<feature type="zinc finger region" description="C2H2-type 1" evidence="1">
    <location>
        <begin position="593"/>
        <end position="615"/>
    </location>
</feature>
<feature type="zinc finger region" description="C2H2-type 2" evidence="1">
    <location>
        <begin position="621"/>
        <end position="643"/>
    </location>
</feature>
<feature type="zinc finger region" description="C2H2-type 3" evidence="1">
    <location>
        <begin position="649"/>
        <end position="671"/>
    </location>
</feature>
<feature type="zinc finger region" description="C2H2-type 4" evidence="1">
    <location>
        <begin position="677"/>
        <end position="702"/>
    </location>
</feature>
<feature type="region of interest" description="Disordered" evidence="2">
    <location>
        <begin position="1"/>
        <end position="63"/>
    </location>
</feature>
<feature type="region of interest" description="Disordered" evidence="2">
    <location>
        <begin position="93"/>
        <end position="124"/>
    </location>
</feature>
<feature type="region of interest" description="Polyglutamine domain" evidence="10">
    <location>
        <begin position="136"/>
        <end position="158"/>
    </location>
</feature>
<feature type="region of interest" description="Disordered" evidence="2">
    <location>
        <begin position="138"/>
        <end position="275"/>
    </location>
</feature>
<feature type="region of interest" description="Disordered" evidence="2">
    <location>
        <begin position="326"/>
        <end position="415"/>
    </location>
</feature>
<feature type="region of interest" description="Polyasparagine domain" evidence="10">
    <location>
        <begin position="362"/>
        <end position="386"/>
    </location>
</feature>
<feature type="region of interest" description="Disordered" evidence="2">
    <location>
        <begin position="743"/>
        <end position="812"/>
    </location>
</feature>
<feature type="region of interest" description="Disordered" evidence="2">
    <location>
        <begin position="853"/>
        <end position="877"/>
    </location>
</feature>
<feature type="compositionally biased region" description="Polar residues" evidence="2">
    <location>
        <begin position="13"/>
        <end position="34"/>
    </location>
</feature>
<feature type="compositionally biased region" description="Low complexity" evidence="2">
    <location>
        <begin position="44"/>
        <end position="56"/>
    </location>
</feature>
<feature type="compositionally biased region" description="Polar residues" evidence="2">
    <location>
        <begin position="107"/>
        <end position="116"/>
    </location>
</feature>
<feature type="compositionally biased region" description="Low complexity" evidence="2">
    <location>
        <begin position="138"/>
        <end position="158"/>
    </location>
</feature>
<feature type="compositionally biased region" description="Polar residues" evidence="2">
    <location>
        <begin position="164"/>
        <end position="194"/>
    </location>
</feature>
<feature type="compositionally biased region" description="Low complexity" evidence="2">
    <location>
        <begin position="206"/>
        <end position="222"/>
    </location>
</feature>
<feature type="compositionally biased region" description="Low complexity" evidence="2">
    <location>
        <begin position="245"/>
        <end position="275"/>
    </location>
</feature>
<feature type="compositionally biased region" description="Low complexity" evidence="2">
    <location>
        <begin position="359"/>
        <end position="390"/>
    </location>
</feature>
<feature type="compositionally biased region" description="Polar residues" evidence="2">
    <location>
        <begin position="391"/>
        <end position="412"/>
    </location>
</feature>
<feature type="compositionally biased region" description="Polar residues" evidence="2">
    <location>
        <begin position="754"/>
        <end position="770"/>
    </location>
</feature>
<feature type="compositionally biased region" description="Low complexity" evidence="2">
    <location>
        <begin position="771"/>
        <end position="782"/>
    </location>
</feature>
<feature type="compositionally biased region" description="Low complexity" evidence="2">
    <location>
        <begin position="796"/>
        <end position="809"/>
    </location>
</feature>
<feature type="compositionally biased region" description="Low complexity" evidence="2">
    <location>
        <begin position="856"/>
        <end position="868"/>
    </location>
</feature>
<feature type="modified residue" description="Phosphoserine" evidence="14">
    <location>
        <position position="61"/>
    </location>
</feature>
<feature type="modified residue" description="Phosphoserine" evidence="14">
    <location>
        <position position="286"/>
    </location>
</feature>
<feature type="modified residue" description="Phosphoserine" evidence="14">
    <location>
        <position position="325"/>
    </location>
</feature>
<name>AZF1_YEAST</name>
<accession>P41696</accession>
<accession>D6W2H2</accession>
<protein>
    <recommendedName>
        <fullName evidence="12">Transcription factor AZF1</fullName>
    </recommendedName>
    <alternativeName>
        <fullName evidence="13">asparagine-rich zinc-finger protein 1</fullName>
    </alternativeName>
</protein>